<organism>
    <name type="scientific">Homo sapiens</name>
    <name type="common">Human</name>
    <dbReference type="NCBI Taxonomy" id="9606"/>
    <lineage>
        <taxon>Eukaryota</taxon>
        <taxon>Metazoa</taxon>
        <taxon>Chordata</taxon>
        <taxon>Craniata</taxon>
        <taxon>Vertebrata</taxon>
        <taxon>Euteleostomi</taxon>
        <taxon>Mammalia</taxon>
        <taxon>Eutheria</taxon>
        <taxon>Euarchontoglires</taxon>
        <taxon>Primates</taxon>
        <taxon>Haplorrhini</taxon>
        <taxon>Catarrhini</taxon>
        <taxon>Hominidae</taxon>
        <taxon>Homo</taxon>
    </lineage>
</organism>
<comment type="function">
    <text evidence="5 6 7 8 9 10">Probable GTP-binding protein (PubMed:24286120). Functions in innate immunity and more specifically the inflammatory response as a regulator of the Toll-like receptor TLR2 and TLR4 signaling pathways (PubMed:26599367, PubMed:28471450, PubMed:28609714). Negatively regulates the part of the TLR4 signaling pathway that leads to the activation of the transcription factor AP-1. By retaining the phosphatase complex PP2A into the cytoplasm, prevents the dephosphorylation of the AP-1 subunit JUN which is required for proper activation of the transcription factor (PubMed:28609714). Both inhibits and activates the TLR2-dependent signaling pathway (PubMed:26599367). Positively regulates the TLR2 signaling pathway to activate specifically the downstream p38 and JNK MAP kinases and promote the polarization of macrophages toward the pro-inflammatory M1 phenotype (PubMed:28471450). It may also play a role in the regulation of inflammation induced by high glucose through the PKB/AKT signaling pathway (PubMed:29168081). Also involved in erythrocyte differentiation through activation of the ERK1/ERK2 signaling pathway (PubMed:23327923).</text>
</comment>
<comment type="subunit">
    <text evidence="5 6 8 9">Interacts with RAF1 (PubMed:23327923). Interacts with HSPD1 (PubMed:24286120). Interacts with PPP2CA; retains PPP2CA into the cytoplasm and excludes it from the nucleus (PubMed:28609714). Interacts with PPP2R2A; the interaction is direct (PubMed:28609714). Interacts with PJA2 (PubMed:28471450).</text>
</comment>
<comment type="interaction">
    <interactant intactId="EBI-2864441">
        <id>Q9Y4C4</id>
    </interactant>
    <interactant intactId="EBI-352528">
        <id>P10809</id>
        <label>HSPD1</label>
    </interactant>
    <organismsDiffer>false</organismsDiffer>
    <experiments>3</experiments>
</comment>
<comment type="interaction">
    <interactant intactId="EBI-2864441">
        <id>Q9Y4C4</id>
    </interactant>
    <interactant intactId="EBI-1050125">
        <id>O15173</id>
        <label>PGRMC2</label>
    </interactant>
    <organismsDiffer>false</organismsDiffer>
    <experiments>2</experiments>
</comment>
<comment type="subcellular location">
    <subcellularLocation>
        <location evidence="6">Cytoplasm</location>
    </subcellularLocation>
</comment>
<comment type="tissue specificity">
    <text evidence="5 11">Ubiquitously expressed. Overexpressed in malignant fibrous histiocytomas (PubMed:9973190). Expressed in red blood cells (at protein level) (PubMed:23327923).</text>
</comment>
<comment type="induction">
    <text evidence="4 5 7 10">Up-regulated during erythroid cells differentiation (at protein level) (PubMed:23327923). Up-regulated upon Toll-like receptor TLR2 stimulation (PubMed:26599367). Up-regulated in macrophages upon M. tuberculosis infection (PubMed:20616063). Up-regulated upon sepsis (PubMed:26599367). Up-regulated by glucose (PubMed:29168081).</text>
</comment>
<comment type="PTM">
    <text evidence="8">Ubiquitinated. Ubiquitination by PJA2 does not lead MFHAS1 to proteasomal degradation but positively regulates its function in polarization of macrophages.</text>
</comment>
<comment type="disease">
    <text evidence="2">A chromosomal aberration involving MFHAS1 may be a cause of B-cell lymphoma. Translocation t(8;14)(p23.1;q21) with a cryptic exon named '14q21 element'. The resulting fusion protein named 'chimeric MASL1' is tumorigenic in nude mice.</text>
</comment>
<sequence length="1052" mass="116950">MAGMDSGNLKTARLWRDAALRARKLRSNLRQLTLTAAGACPGAGADALESPASPQLVLPANLGDIEALNLGNNGLEEVPEGLGSALGSLRVLVLRRNRFARLPPAVAELGHHLTELDVSHNRLTALGAEVVSALRELRKLNLSHNQLPALPAQLGALAHLEELDVSFNRLAHLPDSLSCLSRLRTLDVDHNQLTAFPRQLLQLVALEELDVSSNRLRGLPEDISALRALKILWLSGAELGTLPAGFCELASLESLMLDNNGLQALPAQFSCLQRLKMLNLSSNLFEEFPAALLPLAGLEELYLSRNQLTSVPSLISGLGRLLTLWLDNNRIRYLPDSIVELTGLEELVLQGNQIAVLPDHFGQLSRVGLWKIKDNPLIQPPYEVCMKGIPYIAAYQKELAHSQPAVQPRLKLLLMGHKAAGKTLLRHCLTEERVEGCPGGGDKEKCYPPSPPPVSKGIEVTSWTADASRGLRFIVYDLAGDESYEVIQPFFLSPGALYVLVVNLATYEPRHFPTTVGSFLHRVGARVPHAVVCIVGTHADLCGERELEEKCLDIHRQIALQEKHDAEGLSRLAKVVDEALARDFELRSASPHAAYYGVSDKNLRRRKAHFQYLLNHRLQILSPVLPVSCRDPRHLRRLRDKLLSVAEHREIFPNLHRVLPRSWQVLEELHFQPPQAQRLWLSWWDSARLGLQAGLTEDRLQSALSYLHESGKLLYFEDSPALKEHVFHNLTRLIDILNVFFQRDPSLLLHKLLLGTSGEGKAEGESSPPMARSTPSQELLRATQLHQYVEGFLLHGLLPAHVIRLLLKPHVQAQQDLQLLLELLEKMGLCYCLNKPKGKPLNGSTAWYKFPCYVQNEVPHAEAWINGTNLAGQSFVAEQLQIEYSFPFTFPLGLFARYSVQINSHVVHRSDGKFQIFAYRGKVPVVVSYRPARGVLQPDTLSIASHASLPNIWTAWQAITPLVEELNVLLQEWPGLHYTVHILCSKCLKRGSPNPHAFPGELLSQPRPEGVAEIICPKNGSERVNVALVYPPTPTVISPCSKKNVGEKHRNQ</sequence>
<protein>
    <recommendedName>
        <fullName evidence="13">Malignant fibrous histiocytoma-amplified sequence 1</fullName>
    </recommendedName>
    <alternativeName>
        <fullName evidence="12">Malignant fibrous histiocytoma-amplified sequence with leucine-rich tandem repeats 1</fullName>
    </alternativeName>
</protein>
<evidence type="ECO:0000255" key="1">
    <source>
        <dbReference type="PROSITE-ProRule" id="PRU00758"/>
    </source>
</evidence>
<evidence type="ECO:0000269" key="2">
    <source>
    </source>
</evidence>
<evidence type="ECO:0000269" key="3">
    <source>
    </source>
</evidence>
<evidence type="ECO:0000269" key="4">
    <source>
    </source>
</evidence>
<evidence type="ECO:0000269" key="5">
    <source>
    </source>
</evidence>
<evidence type="ECO:0000269" key="6">
    <source>
    </source>
</evidence>
<evidence type="ECO:0000269" key="7">
    <source>
    </source>
</evidence>
<evidence type="ECO:0000269" key="8">
    <source>
    </source>
</evidence>
<evidence type="ECO:0000269" key="9">
    <source>
    </source>
</evidence>
<evidence type="ECO:0000269" key="10">
    <source>
    </source>
</evidence>
<evidence type="ECO:0000269" key="11">
    <source>
    </source>
</evidence>
<evidence type="ECO:0000303" key="12">
    <source>
    </source>
</evidence>
<evidence type="ECO:0000305" key="13"/>
<evidence type="ECO:0000312" key="14">
    <source>
        <dbReference type="HGNC" id="HGNC:16982"/>
    </source>
</evidence>
<evidence type="ECO:0007744" key="15">
    <source>
    </source>
</evidence>
<evidence type="ECO:0007744" key="16">
    <source>
    </source>
</evidence>
<keyword id="KW-0007">Acetylation</keyword>
<keyword id="KW-0160">Chromosomal rearrangement</keyword>
<keyword id="KW-0963">Cytoplasm</keyword>
<keyword id="KW-0342">GTP-binding</keyword>
<keyword id="KW-0391">Immunity</keyword>
<keyword id="KW-0395">Inflammatory response</keyword>
<keyword id="KW-0399">Innate immunity</keyword>
<keyword id="KW-0433">Leucine-rich repeat</keyword>
<keyword id="KW-0547">Nucleotide-binding</keyword>
<keyword id="KW-1267">Proteomics identification</keyword>
<keyword id="KW-1185">Reference proteome</keyword>
<keyword id="KW-0677">Repeat</keyword>
<keyword id="KW-0734">Signal transduction inhibitor</keyword>
<keyword id="KW-0043">Tumor suppressor</keyword>
<keyword id="KW-0832">Ubl conjugation</keyword>
<dbReference type="EMBL" id="AB016816">
    <property type="protein sequence ID" value="BAA74737.1"/>
    <property type="molecule type" value="mRNA"/>
</dbReference>
<dbReference type="EMBL" id="AC090567">
    <property type="status" value="NOT_ANNOTATED_CDS"/>
    <property type="molecule type" value="Genomic_DNA"/>
</dbReference>
<dbReference type="EMBL" id="BC014226">
    <property type="protein sequence ID" value="AAH14226.2"/>
    <property type="molecule type" value="mRNA"/>
</dbReference>
<dbReference type="CCDS" id="CCDS34844.1"/>
<dbReference type="RefSeq" id="NP_004216.2">
    <property type="nucleotide sequence ID" value="NM_004225.3"/>
</dbReference>
<dbReference type="SMR" id="Q9Y4C4"/>
<dbReference type="BioGRID" id="114681">
    <property type="interactions" value="131"/>
</dbReference>
<dbReference type="FunCoup" id="Q9Y4C4">
    <property type="interactions" value="946"/>
</dbReference>
<dbReference type="IntAct" id="Q9Y4C4">
    <property type="interactions" value="101"/>
</dbReference>
<dbReference type="MINT" id="Q9Y4C4"/>
<dbReference type="STRING" id="9606.ENSP00000276282"/>
<dbReference type="GlyGen" id="Q9Y4C4">
    <property type="glycosylation" value="3 sites, 2 O-linked glycans (2 sites)"/>
</dbReference>
<dbReference type="iPTMnet" id="Q9Y4C4"/>
<dbReference type="PhosphoSitePlus" id="Q9Y4C4"/>
<dbReference type="BioMuta" id="MFHAS1"/>
<dbReference type="DMDM" id="296437367"/>
<dbReference type="jPOST" id="Q9Y4C4"/>
<dbReference type="MassIVE" id="Q9Y4C4"/>
<dbReference type="PaxDb" id="9606-ENSP00000276282"/>
<dbReference type="PeptideAtlas" id="Q9Y4C4"/>
<dbReference type="ProteomicsDB" id="86160"/>
<dbReference type="Pumba" id="Q9Y4C4"/>
<dbReference type="Antibodypedia" id="65867">
    <property type="antibodies" value="13 antibodies from 8 providers"/>
</dbReference>
<dbReference type="DNASU" id="9258"/>
<dbReference type="Ensembl" id="ENST00000276282.7">
    <property type="protein sequence ID" value="ENSP00000276282.6"/>
    <property type="gene ID" value="ENSG00000147324.11"/>
</dbReference>
<dbReference type="GeneID" id="9258"/>
<dbReference type="KEGG" id="hsa:9258"/>
<dbReference type="MANE-Select" id="ENST00000276282.7">
    <property type="protein sequence ID" value="ENSP00000276282.6"/>
    <property type="RefSeq nucleotide sequence ID" value="NM_004225.3"/>
    <property type="RefSeq protein sequence ID" value="NP_004216.2"/>
</dbReference>
<dbReference type="UCSC" id="uc003wsj.2">
    <property type="organism name" value="human"/>
</dbReference>
<dbReference type="AGR" id="HGNC:16982"/>
<dbReference type="CTD" id="9258"/>
<dbReference type="DisGeNET" id="9258"/>
<dbReference type="GeneCards" id="MFHAS1"/>
<dbReference type="HGNC" id="HGNC:16982">
    <property type="gene designation" value="MFHAS1"/>
</dbReference>
<dbReference type="HPA" id="ENSG00000147324">
    <property type="expression patterns" value="Low tissue specificity"/>
</dbReference>
<dbReference type="MalaCards" id="MFHAS1"/>
<dbReference type="MIM" id="605352">
    <property type="type" value="gene"/>
</dbReference>
<dbReference type="neXtProt" id="NX_Q9Y4C4"/>
<dbReference type="OpenTargets" id="ENSG00000147324"/>
<dbReference type="PharmGKB" id="PA30773"/>
<dbReference type="VEuPathDB" id="HostDB:ENSG00000147324"/>
<dbReference type="eggNOG" id="KOG0619">
    <property type="taxonomic scope" value="Eukaryota"/>
</dbReference>
<dbReference type="GeneTree" id="ENSGT00940000158928"/>
<dbReference type="HOGENOM" id="CLU_320767_0_0_1"/>
<dbReference type="InParanoid" id="Q9Y4C4"/>
<dbReference type="OMA" id="IVCPKNG"/>
<dbReference type="OrthoDB" id="676979at2759"/>
<dbReference type="PAN-GO" id="Q9Y4C4">
    <property type="GO annotations" value="0 GO annotations based on evolutionary models"/>
</dbReference>
<dbReference type="PhylomeDB" id="Q9Y4C4"/>
<dbReference type="TreeFam" id="TF351429"/>
<dbReference type="PathwayCommons" id="Q9Y4C4"/>
<dbReference type="SignaLink" id="Q9Y4C4"/>
<dbReference type="BioGRID-ORCS" id="9258">
    <property type="hits" value="12 hits in 1154 CRISPR screens"/>
</dbReference>
<dbReference type="CD-CODE" id="91857CE7">
    <property type="entry name" value="Nucleolus"/>
</dbReference>
<dbReference type="ChiTaRS" id="MFHAS1">
    <property type="organism name" value="human"/>
</dbReference>
<dbReference type="GenomeRNAi" id="9258"/>
<dbReference type="Pharos" id="Q9Y4C4">
    <property type="development level" value="Tbio"/>
</dbReference>
<dbReference type="PRO" id="PR:Q9Y4C4"/>
<dbReference type="Proteomes" id="UP000005640">
    <property type="component" value="Chromosome 8"/>
</dbReference>
<dbReference type="RNAct" id="Q9Y4C4">
    <property type="molecule type" value="protein"/>
</dbReference>
<dbReference type="Bgee" id="ENSG00000147324">
    <property type="expression patterns" value="Expressed in saphenous vein and 186 other cell types or tissues"/>
</dbReference>
<dbReference type="GO" id="GO:0005737">
    <property type="term" value="C:cytoplasm"/>
    <property type="evidence" value="ECO:0000314"/>
    <property type="project" value="UniProtKB"/>
</dbReference>
<dbReference type="GO" id="GO:0005525">
    <property type="term" value="F:GTP binding"/>
    <property type="evidence" value="ECO:0000314"/>
    <property type="project" value="UniProtKB"/>
</dbReference>
<dbReference type="GO" id="GO:0051721">
    <property type="term" value="F:protein phosphatase 2A binding"/>
    <property type="evidence" value="ECO:0000314"/>
    <property type="project" value="UniProtKB"/>
</dbReference>
<dbReference type="GO" id="GO:0031625">
    <property type="term" value="F:ubiquitin protein ligase binding"/>
    <property type="evidence" value="ECO:0000353"/>
    <property type="project" value="UniProtKB"/>
</dbReference>
<dbReference type="GO" id="GO:0030218">
    <property type="term" value="P:erythrocyte differentiation"/>
    <property type="evidence" value="ECO:0000315"/>
    <property type="project" value="UniProtKB"/>
</dbReference>
<dbReference type="GO" id="GO:0006954">
    <property type="term" value="P:inflammatory response"/>
    <property type="evidence" value="ECO:0000315"/>
    <property type="project" value="UniProtKB"/>
</dbReference>
<dbReference type="GO" id="GO:0045087">
    <property type="term" value="P:innate immune response"/>
    <property type="evidence" value="ECO:0000315"/>
    <property type="project" value="UniProtKB"/>
</dbReference>
<dbReference type="GO" id="GO:0035556">
    <property type="term" value="P:intracellular signal transduction"/>
    <property type="evidence" value="ECO:0000315"/>
    <property type="project" value="UniProtKB"/>
</dbReference>
<dbReference type="GO" id="GO:0050728">
    <property type="term" value="P:negative regulation of inflammatory response"/>
    <property type="evidence" value="ECO:0000315"/>
    <property type="project" value="UniProtKB"/>
</dbReference>
<dbReference type="GO" id="GO:1900181">
    <property type="term" value="P:negative regulation of protein localization to nucleus"/>
    <property type="evidence" value="ECO:0000315"/>
    <property type="project" value="UniProtKB"/>
</dbReference>
<dbReference type="GO" id="GO:0034136">
    <property type="term" value="P:negative regulation of toll-like receptor 2 signaling pathway"/>
    <property type="evidence" value="ECO:0000315"/>
    <property type="project" value="UniProtKB"/>
</dbReference>
<dbReference type="GO" id="GO:0034144">
    <property type="term" value="P:negative regulation of toll-like receptor 4 signaling pathway"/>
    <property type="evidence" value="ECO:0000315"/>
    <property type="project" value="UniProtKB"/>
</dbReference>
<dbReference type="GO" id="GO:0070374">
    <property type="term" value="P:positive regulation of ERK1 and ERK2 cascade"/>
    <property type="evidence" value="ECO:0000315"/>
    <property type="project" value="UniProtKB"/>
</dbReference>
<dbReference type="GO" id="GO:0046330">
    <property type="term" value="P:positive regulation of JNK cascade"/>
    <property type="evidence" value="ECO:0000315"/>
    <property type="project" value="UniProtKB"/>
</dbReference>
<dbReference type="GO" id="GO:1900745">
    <property type="term" value="P:positive regulation of p38MAPK cascade"/>
    <property type="evidence" value="ECO:0000315"/>
    <property type="project" value="UniProtKB"/>
</dbReference>
<dbReference type="GO" id="GO:0051897">
    <property type="term" value="P:positive regulation of phosphatidylinositol 3-kinase/protein kinase B signal transduction"/>
    <property type="evidence" value="ECO:0000315"/>
    <property type="project" value="UniProtKB"/>
</dbReference>
<dbReference type="GO" id="GO:0034137">
    <property type="term" value="P:positive regulation of toll-like receptor 2 signaling pathway"/>
    <property type="evidence" value="ECO:0000315"/>
    <property type="project" value="UniProtKB"/>
</dbReference>
<dbReference type="GO" id="GO:0043030">
    <property type="term" value="P:regulation of macrophage activation"/>
    <property type="evidence" value="ECO:0000315"/>
    <property type="project" value="UniProtKB"/>
</dbReference>
<dbReference type="GO" id="GO:0034121">
    <property type="term" value="P:regulation of toll-like receptor signaling pathway"/>
    <property type="evidence" value="ECO:0007669"/>
    <property type="project" value="Ensembl"/>
</dbReference>
<dbReference type="FunFam" id="3.80.10.10:FF:001164">
    <property type="entry name" value="GH01279p"/>
    <property type="match status" value="1"/>
</dbReference>
<dbReference type="FunFam" id="3.30.70.1390:FF:000003">
    <property type="entry name" value="Malignant fibrous histiocytoma-amplified sequence 1 homolog"/>
    <property type="match status" value="1"/>
</dbReference>
<dbReference type="FunFam" id="3.40.50.300:FF:000850">
    <property type="entry name" value="Malignant fibrous histiocytoma-amplified sequence 1 homolog"/>
    <property type="match status" value="1"/>
</dbReference>
<dbReference type="FunFam" id="3.80.10.10:FF:000351">
    <property type="entry name" value="malignant fibrous histiocytoma-amplified sequence 1 isoform X1"/>
    <property type="match status" value="1"/>
</dbReference>
<dbReference type="Gene3D" id="3.40.50.300">
    <property type="entry name" value="P-loop containing nucleotide triphosphate hydrolases"/>
    <property type="match status" value="1"/>
</dbReference>
<dbReference type="Gene3D" id="3.80.10.10">
    <property type="entry name" value="Ribonuclease Inhibitor"/>
    <property type="match status" value="2"/>
</dbReference>
<dbReference type="Gene3D" id="3.30.70.1390">
    <property type="entry name" value="ROC domain from the Parkinson's disease-associated leucine-rich repeat kinase 2"/>
    <property type="match status" value="1"/>
</dbReference>
<dbReference type="InterPro" id="IPR001611">
    <property type="entry name" value="Leu-rich_rpt"/>
</dbReference>
<dbReference type="InterPro" id="IPR003591">
    <property type="entry name" value="Leu-rich_rpt_typical-subtyp"/>
</dbReference>
<dbReference type="InterPro" id="IPR032675">
    <property type="entry name" value="LRR_dom_sf"/>
</dbReference>
<dbReference type="InterPro" id="IPR050216">
    <property type="entry name" value="LRR_domain-containing"/>
</dbReference>
<dbReference type="InterPro" id="IPR027417">
    <property type="entry name" value="P-loop_NTPase"/>
</dbReference>
<dbReference type="InterPro" id="IPR020859">
    <property type="entry name" value="ROC"/>
</dbReference>
<dbReference type="PANTHER" id="PTHR48051">
    <property type="match status" value="1"/>
</dbReference>
<dbReference type="PANTHER" id="PTHR48051:SF1">
    <property type="entry name" value="RAS SUPPRESSOR PROTEIN 1"/>
    <property type="match status" value="1"/>
</dbReference>
<dbReference type="Pfam" id="PF13855">
    <property type="entry name" value="LRR_8"/>
    <property type="match status" value="3"/>
</dbReference>
<dbReference type="PRINTS" id="PR00019">
    <property type="entry name" value="LEURICHRPT"/>
</dbReference>
<dbReference type="SMART" id="SM00364">
    <property type="entry name" value="LRR_BAC"/>
    <property type="match status" value="11"/>
</dbReference>
<dbReference type="SMART" id="SM00365">
    <property type="entry name" value="LRR_SD22"/>
    <property type="match status" value="5"/>
</dbReference>
<dbReference type="SMART" id="SM00369">
    <property type="entry name" value="LRR_TYP"/>
    <property type="match status" value="13"/>
</dbReference>
<dbReference type="SUPFAM" id="SSF52058">
    <property type="entry name" value="L domain-like"/>
    <property type="match status" value="1"/>
</dbReference>
<dbReference type="SUPFAM" id="SSF52540">
    <property type="entry name" value="P-loop containing nucleoside triphosphate hydrolases"/>
    <property type="match status" value="1"/>
</dbReference>
<dbReference type="SUPFAM" id="SSF82615">
    <property type="entry name" value="Polo-box domain"/>
    <property type="match status" value="1"/>
</dbReference>
<dbReference type="PROSITE" id="PS51450">
    <property type="entry name" value="LRR"/>
    <property type="match status" value="12"/>
</dbReference>
<dbReference type="PROSITE" id="PS51424">
    <property type="entry name" value="ROC"/>
    <property type="match status" value="1"/>
</dbReference>
<feature type="initiator methionine" description="Removed" evidence="16">
    <location>
        <position position="1"/>
    </location>
</feature>
<feature type="chain" id="PRO_0000308609" description="Malignant fibrous histiocytoma-amplified sequence 1">
    <location>
        <begin position="2"/>
        <end position="1052"/>
    </location>
</feature>
<feature type="repeat" description="LRR 1">
    <location>
        <begin position="64"/>
        <end position="85"/>
    </location>
</feature>
<feature type="repeat" description="LRR 2">
    <location>
        <begin position="88"/>
        <end position="109"/>
    </location>
</feature>
<feature type="repeat" description="LRR 3">
    <location>
        <begin position="112"/>
        <end position="133"/>
    </location>
</feature>
<feature type="repeat" description="LRR 4">
    <location>
        <begin position="136"/>
        <end position="157"/>
    </location>
</feature>
<feature type="repeat" description="LRR 5">
    <location>
        <begin position="159"/>
        <end position="180"/>
    </location>
</feature>
<feature type="repeat" description="LRR 6">
    <location>
        <begin position="182"/>
        <end position="203"/>
    </location>
</feature>
<feature type="repeat" description="LRR 7">
    <location>
        <begin position="205"/>
        <end position="226"/>
    </location>
</feature>
<feature type="repeat" description="LRR 8">
    <location>
        <begin position="228"/>
        <end position="249"/>
    </location>
</feature>
<feature type="repeat" description="LRR 9">
    <location>
        <begin position="251"/>
        <end position="272"/>
    </location>
</feature>
<feature type="repeat" description="LRR 10">
    <location>
        <begin position="274"/>
        <end position="296"/>
    </location>
</feature>
<feature type="repeat" description="LRR 11">
    <location>
        <begin position="297"/>
        <end position="318"/>
    </location>
</feature>
<feature type="repeat" description="LRR 12">
    <location>
        <begin position="320"/>
        <end position="341"/>
    </location>
</feature>
<feature type="repeat" description="LRR 13">
    <location>
        <begin position="343"/>
        <end position="364"/>
    </location>
</feature>
<feature type="domain" description="Roc" evidence="1">
    <location>
        <begin position="403"/>
        <end position="649"/>
    </location>
</feature>
<feature type="region of interest" description="Required for interaction with PPP2R2A" evidence="9">
    <location>
        <begin position="64"/>
        <end position="649"/>
    </location>
</feature>
<feature type="region of interest" description="Required for interaction with PJA2" evidence="8">
    <location>
        <begin position="64"/>
        <end position="364"/>
    </location>
</feature>
<feature type="site" description="Breakpoint for translocation to form chimeric MASL1">
    <location>
        <begin position="1000"/>
        <end position="1001"/>
    </location>
</feature>
<feature type="modified residue" description="N-acetylalanine" evidence="16">
    <location>
        <position position="2"/>
    </location>
</feature>
<feature type="modified residue" description="N6-acetyllysine" evidence="15">
    <location>
        <position position="601"/>
    </location>
</feature>
<feature type="sequence variant" id="VAR_036846" description="In dbSNP:rs34984230.">
    <original>L</original>
    <variation>V</variation>
    <location>
        <position position="163"/>
    </location>
</feature>
<feature type="sequence variant" id="VAR_036847" description="In dbSNP:rs429433." evidence="3 11">
    <original>L</original>
    <variation>P</variation>
    <location>
        <position position="892"/>
    </location>
</feature>
<feature type="mutagenesis site" description="Dominant negative effect on the ERK1/ERK2 signaling pathway and EPO-induced erythroid differentiation." evidence="5">
    <location>
        <begin position="414"/>
        <end position="556"/>
    </location>
</feature>
<feature type="mutagenesis site" description="Loss of GTP-binding." evidence="6">
    <original>K</original>
    <variation>A</variation>
    <location>
        <position position="443"/>
    </location>
</feature>
<feature type="mutagenesis site" description="Dominant negative effect on the ERK1/ERK2 signaling pathway and EPO-induced erythroid differentiation." evidence="5">
    <original>S</original>
    <variation>A</variation>
    <location>
        <position position="450"/>
    </location>
</feature>
<feature type="sequence conflict" description="In Ref. 1; BAA74737." evidence="13" ref="1">
    <original>H</original>
    <variation>N</variation>
    <location>
        <position position="529"/>
    </location>
</feature>
<proteinExistence type="evidence at protein level"/>
<reference key="1">
    <citation type="journal article" date="1999" name="Cancer Res.">
        <title>Identification of a novel gene, MASL1, within an amplicon at 8p23.1 detected in malignant fibrous histiocytomas by comparative genomic hybridization.</title>
        <authorList>
            <person name="Sakabe T."/>
            <person name="Shinomiya T."/>
            <person name="Mori T."/>
            <person name="Ariyama Y."/>
            <person name="Fukuda Y."/>
            <person name="Fujiwara T."/>
            <person name="Nakamura Y."/>
            <person name="Inazawa J."/>
        </authorList>
    </citation>
    <scope>NUCLEOTIDE SEQUENCE [MRNA]</scope>
    <scope>TISSUE SPECIFICITY</scope>
    <scope>VARIANT PRO-892</scope>
    <source>
        <tissue>Fetal brain</tissue>
    </source>
</reference>
<reference key="2">
    <citation type="journal article" date="2006" name="Nature">
        <title>DNA sequence and analysis of human chromosome 8.</title>
        <authorList>
            <person name="Nusbaum C."/>
            <person name="Mikkelsen T.S."/>
            <person name="Zody M.C."/>
            <person name="Asakawa S."/>
            <person name="Taudien S."/>
            <person name="Garber M."/>
            <person name="Kodira C.D."/>
            <person name="Schueler M.G."/>
            <person name="Shimizu A."/>
            <person name="Whittaker C.A."/>
            <person name="Chang J.L."/>
            <person name="Cuomo C.A."/>
            <person name="Dewar K."/>
            <person name="FitzGerald M.G."/>
            <person name="Yang X."/>
            <person name="Allen N.R."/>
            <person name="Anderson S."/>
            <person name="Asakawa T."/>
            <person name="Blechschmidt K."/>
            <person name="Bloom T."/>
            <person name="Borowsky M.L."/>
            <person name="Butler J."/>
            <person name="Cook A."/>
            <person name="Corum B."/>
            <person name="DeArellano K."/>
            <person name="DeCaprio D."/>
            <person name="Dooley K.T."/>
            <person name="Dorris L. III"/>
            <person name="Engels R."/>
            <person name="Gloeckner G."/>
            <person name="Hafez N."/>
            <person name="Hagopian D.S."/>
            <person name="Hall J.L."/>
            <person name="Ishikawa S.K."/>
            <person name="Jaffe D.B."/>
            <person name="Kamat A."/>
            <person name="Kudoh J."/>
            <person name="Lehmann R."/>
            <person name="Lokitsang T."/>
            <person name="Macdonald P."/>
            <person name="Major J.E."/>
            <person name="Matthews C.D."/>
            <person name="Mauceli E."/>
            <person name="Menzel U."/>
            <person name="Mihalev A.H."/>
            <person name="Minoshima S."/>
            <person name="Murayama Y."/>
            <person name="Naylor J.W."/>
            <person name="Nicol R."/>
            <person name="Nguyen C."/>
            <person name="O'Leary S.B."/>
            <person name="O'Neill K."/>
            <person name="Parker S.C.J."/>
            <person name="Polley A."/>
            <person name="Raymond C.K."/>
            <person name="Reichwald K."/>
            <person name="Rodriguez J."/>
            <person name="Sasaki T."/>
            <person name="Schilhabel M."/>
            <person name="Siddiqui R."/>
            <person name="Smith C.L."/>
            <person name="Sneddon T.P."/>
            <person name="Talamas J.A."/>
            <person name="Tenzin P."/>
            <person name="Topham K."/>
            <person name="Venkataraman V."/>
            <person name="Wen G."/>
            <person name="Yamazaki S."/>
            <person name="Young S.K."/>
            <person name="Zeng Q."/>
            <person name="Zimmer A.R."/>
            <person name="Rosenthal A."/>
            <person name="Birren B.W."/>
            <person name="Platzer M."/>
            <person name="Shimizu N."/>
            <person name="Lander E.S."/>
        </authorList>
    </citation>
    <scope>NUCLEOTIDE SEQUENCE [LARGE SCALE GENOMIC DNA]</scope>
</reference>
<reference key="3">
    <citation type="journal article" date="2004" name="Genome Res.">
        <title>The status, quality, and expansion of the NIH full-length cDNA project: the Mammalian Gene Collection (MGC).</title>
        <authorList>
            <consortium name="The MGC Project Team"/>
        </authorList>
    </citation>
    <scope>NUCLEOTIDE SEQUENCE [LARGE SCALE MRNA] OF 383-1052</scope>
    <scope>VARIANT PRO-892</scope>
    <source>
        <tissue>B-cell</tissue>
    </source>
</reference>
<reference key="4">
    <citation type="journal article" date="2004" name="Oncogene">
        <title>MASL1, a candidate oncogene found in amplification at 8p23.1, is translocated in immunoblastic B-cell lymphoma cell line OCI-LY8.</title>
        <authorList>
            <person name="Tagawa H."/>
            <person name="Karnan S."/>
            <person name="Kasugai Y."/>
            <person name="Tuzuki S."/>
            <person name="Suzuki R."/>
            <person name="Hosokawa Y."/>
            <person name="Seto M."/>
        </authorList>
    </citation>
    <scope>DISEASE</scope>
    <scope>CHROMOSOMAL TRANSLOCATION WITH 14Q21 ELEMENT</scope>
</reference>
<reference key="5">
    <citation type="journal article" date="2009" name="Science">
        <title>Lysine acetylation targets protein complexes and co-regulates major cellular functions.</title>
        <authorList>
            <person name="Choudhary C."/>
            <person name="Kumar C."/>
            <person name="Gnad F."/>
            <person name="Nielsen M.L."/>
            <person name="Rehman M."/>
            <person name="Walther T.C."/>
            <person name="Olsen J.V."/>
            <person name="Mann M."/>
        </authorList>
    </citation>
    <scope>ACETYLATION [LARGE SCALE ANALYSIS] AT LYS-601</scope>
    <scope>IDENTIFICATION BY MASS SPECTROMETRY [LARGE SCALE ANALYSIS]</scope>
</reference>
<reference key="6">
    <citation type="journal article" date="2011" name="Proc. Natl. Acad. Sci. U.S.A.">
        <title>Human leucine-rich repeat proteins: a genome-wide bioinformatic categorization and functional analysis in innate immunity.</title>
        <authorList>
            <person name="Ng A.C."/>
            <person name="Eisenberg J.M."/>
            <person name="Heath R.J."/>
            <person name="Huett A."/>
            <person name="Robinson C.M."/>
            <person name="Nau G.J."/>
            <person name="Xavier R.J."/>
        </authorList>
    </citation>
    <scope>INDUCTION</scope>
</reference>
<reference key="7">
    <citation type="journal article" date="2012" name="Proc. Natl. Acad. Sci. U.S.A.">
        <title>N-terminal acetylome analyses and functional insights of the N-terminal acetyltransferase NatB.</title>
        <authorList>
            <person name="Van Damme P."/>
            <person name="Lasa M."/>
            <person name="Polevoda B."/>
            <person name="Gazquez C."/>
            <person name="Elosegui-Artola A."/>
            <person name="Kim D.S."/>
            <person name="De Juan-Pardo E."/>
            <person name="Demeyer K."/>
            <person name="Hole K."/>
            <person name="Larrea E."/>
            <person name="Timmerman E."/>
            <person name="Prieto J."/>
            <person name="Arnesen T."/>
            <person name="Sherman F."/>
            <person name="Gevaert K."/>
            <person name="Aldabe R."/>
        </authorList>
    </citation>
    <scope>ACETYLATION [LARGE SCALE ANALYSIS] AT ALA-2</scope>
    <scope>CLEAVAGE OF INITIATOR METHIONINE [LARGE SCALE ANALYSIS]</scope>
    <scope>IDENTIFICATION BY MASS SPECTROMETRY [LARGE SCALE ANALYSIS]</scope>
</reference>
<reference key="8">
    <citation type="journal article" date="2013" name="Blood">
        <title>MASL1 induces erythroid differentiation in human erythropoietin-dependent CD34+ cells through the Raf/MEK/ERK pathway.</title>
        <authorList>
            <person name="Kumkhaek C."/>
            <person name="Aerbajinai W."/>
            <person name="Liu W."/>
            <person name="Zhu J."/>
            <person name="Uchida N."/>
            <person name="Kurlander R."/>
            <person name="Hsieh M.M."/>
            <person name="Tisdale J.F."/>
            <person name="Rodgers G.P."/>
        </authorList>
    </citation>
    <scope>FUNCTION</scope>
    <scope>INTERACTION WITH RAF1</scope>
    <scope>TISSUE SPECIFICITY</scope>
    <scope>INDUCTION</scope>
    <scope>MUTAGENESIS OF 414-LEU--ARG-556 AND SER-450</scope>
</reference>
<reference key="9">
    <citation type="journal article" date="2014" name="FEBS J.">
        <title>GTP binding controls complex formation by the human ROCO protein MASL1.</title>
        <authorList>
            <person name="Dihanich S."/>
            <person name="Civiero L."/>
            <person name="Manzoni C."/>
            <person name="Mamais A."/>
            <person name="Bandopadhyay R."/>
            <person name="Greggio E."/>
            <person name="Lewis P.A."/>
        </authorList>
    </citation>
    <scope>GTP-BINDING</scope>
    <scope>INTERACTION WITH HSPD1</scope>
    <scope>SUBCELLULAR LOCATION</scope>
    <scope>MUTAGENESIS OF LYS-443</scope>
</reference>
<reference key="10">
    <citation type="journal article" date="2015" name="PLoS ONE">
        <title>MFHAS1 is associated with sepsis and stimulates TLR2/NF-kappaB signaling pathway following negative regulation.</title>
        <authorList>
            <person name="Zhong J."/>
            <person name="Shi Q.Q."/>
            <person name="Zhu M.M."/>
            <person name="Shen J."/>
            <person name="Wang H.H."/>
            <person name="Ma D."/>
            <person name="Miao C.H."/>
        </authorList>
    </citation>
    <scope>FUNCTION</scope>
    <scope>INDUCTION</scope>
</reference>
<reference key="11">
    <citation type="journal article" date="2017" name="Cell Death Dis.">
        <title>Ubiquitylation of MFHAS1 by the ubiquitin ligase praja2 promotes M1 macrophage polarization by activating JNK and p38 pathways.</title>
        <authorList>
            <person name="Zhong J."/>
            <person name="Wang H."/>
            <person name="Chen W."/>
            <person name="Sun Z."/>
            <person name="Chen J."/>
            <person name="Xu Y."/>
            <person name="Weng M."/>
            <person name="Shi Q."/>
            <person name="Ma D."/>
            <person name="Miao C."/>
        </authorList>
    </citation>
    <scope>FUNCTION</scope>
    <scope>INTERACTION WITH PJA2</scope>
    <scope>UBIQUITINATION BY PJA2</scope>
    <scope>REGION</scope>
</reference>
<reference key="12">
    <citation type="journal article" date="2017" name="Mol. Immunol.">
        <title>MFHAS1 suppresses TLR4 signaling pathway via induction of PP2A C subunit cytoplasm translocation and inhibition of c-Jun dephosphorylation at Thr239.</title>
        <authorList>
            <person name="Shi Q."/>
            <person name="Xiong B."/>
            <person name="Zhong J."/>
            <person name="Wang H."/>
            <person name="Ma D."/>
            <person name="Miao C."/>
        </authorList>
    </citation>
    <scope>FUNCTION</scope>
    <scope>INTERACTION WITH PPP2CA AND PPP2R2A</scope>
    <scope>REGION</scope>
</reference>
<reference key="13">
    <citation type="journal article" date="2018" name="Inflammation">
        <title>High Glucose Stimulates Expression of MFHAS1 to Mitigate Inflammation via Akt/HO-1 Pathway in Human Umbilical Vein Endothelial Cells.</title>
        <authorList>
            <person name="Wang H.H."/>
            <person name="Sun P.F."/>
            <person name="Chen W.K."/>
            <person name="Zhong J."/>
            <person name="Shi Q.Q."/>
            <person name="Weng M.L."/>
            <person name="Ma D."/>
            <person name="Miao C.H."/>
        </authorList>
    </citation>
    <scope>FUNCTION</scope>
    <scope>INDUCTION</scope>
</reference>
<name>MFHA1_HUMAN</name>
<gene>
    <name evidence="14" type="primary">MFHAS1</name>
    <name evidence="12" type="synonym">MASL1</name>
</gene>
<accession>Q9Y4C4</accession>
<accession>Q96CI0</accession>